<keyword id="KW-0903">Direct protein sequencing</keyword>
<keyword id="KW-1015">Disulfide bond</keyword>
<keyword id="KW-0872">Ion channel impairing toxin</keyword>
<keyword id="KW-0960">Knottin</keyword>
<keyword id="KW-0528">Neurotoxin</keyword>
<keyword id="KW-0632">Potassium channel impairing toxin</keyword>
<keyword id="KW-0964">Secreted</keyword>
<keyword id="KW-0800">Toxin</keyword>
<keyword id="KW-1220">Voltage-gated potassium channel impairing toxin</keyword>
<reference key="1">
    <citation type="journal article" date="2004" name="Rapid Commun. Mass Spectrom.">
        <title>Nanospray analysis of the venom of the tarantula Theraphosa leblondi: a powerful method for direct venom mass fingerprinting and toxin sequencing.</title>
        <authorList>
            <person name="Legros C."/>
            <person name="Celerier M.-L."/>
            <person name="Henry M."/>
            <person name="Guette C."/>
        </authorList>
    </citation>
    <scope>PROTEIN SEQUENCE</scope>
    <scope>FUNCTION</scope>
    <scope>MASS SPECTROMETRY</scope>
    <scope>SUBCELLULAR LOCATION</scope>
    <source>
        <tissue>Venom</tissue>
    </source>
</reference>
<reference key="2">
    <citation type="journal article" date="2004" name="Toxicon">
        <title>Modulation of Kv4.2 channels by a peptide isolated from the venom of the giant bird-eating tarantula Theraphosa leblondi.</title>
        <authorList>
            <person name="Ebbinghaus J."/>
            <person name="Legros C."/>
            <person name="Nolting A."/>
            <person name="Guette C."/>
            <person name="Celerier M.L."/>
            <person name="Pongs O."/>
            <person name="Bahring R."/>
        </authorList>
    </citation>
    <scope>MASS SPECTROMETRY</scope>
    <scope>SUBCELLULAR LOCATION</scope>
    <source>
        <tissue>Venom</tissue>
    </source>
</reference>
<accession>P83747</accession>
<dbReference type="SMR" id="P83747"/>
<dbReference type="ArachnoServer" id="AS000277">
    <property type="toxin name" value="kappa-theraphotoxin-Tb1c"/>
</dbReference>
<dbReference type="GO" id="GO:0005576">
    <property type="term" value="C:extracellular region"/>
    <property type="evidence" value="ECO:0007669"/>
    <property type="project" value="UniProtKB-SubCell"/>
</dbReference>
<dbReference type="GO" id="GO:0008200">
    <property type="term" value="F:ion channel inhibitor activity"/>
    <property type="evidence" value="ECO:0007669"/>
    <property type="project" value="InterPro"/>
</dbReference>
<dbReference type="GO" id="GO:0015459">
    <property type="term" value="F:potassium channel regulator activity"/>
    <property type="evidence" value="ECO:0007669"/>
    <property type="project" value="UniProtKB-KW"/>
</dbReference>
<dbReference type="GO" id="GO:0090729">
    <property type="term" value="F:toxin activity"/>
    <property type="evidence" value="ECO:0007669"/>
    <property type="project" value="UniProtKB-KW"/>
</dbReference>
<dbReference type="InterPro" id="IPR011696">
    <property type="entry name" value="Huwentoxin-1"/>
</dbReference>
<dbReference type="Pfam" id="PF07740">
    <property type="entry name" value="Toxin_12"/>
    <property type="match status" value="1"/>
</dbReference>
<dbReference type="SUPFAM" id="SSF57059">
    <property type="entry name" value="omega toxin-like"/>
    <property type="match status" value="1"/>
</dbReference>
<comment type="function">
    <text evidence="2">Blocks Kv4.2/KCND2 voltage-gated potassium channels probably by shifting the voltage-dependence of channel activation to more depolarized potentials and by binding to the S3-S4 linker region of the voltage sensor domain.</text>
</comment>
<comment type="subunit">
    <text evidence="6">Monomer.</text>
</comment>
<comment type="subcellular location">
    <subcellularLocation>
        <location evidence="2 3">Secreted</location>
    </subcellularLocation>
</comment>
<comment type="tissue specificity">
    <text evidence="7 8">Expressed by the venom gland.</text>
</comment>
<comment type="domain">
    <text evidence="1">The presence of a 'disulfide through disulfide knot' structurally defines this protein as a knottin.</text>
</comment>
<comment type="mass spectrometry" mass="4208.78" method="Electrospray" evidence="2"/>
<comment type="mass spectrometry" mass="4205.88" method="MALDI" evidence="3">
    <text>Monoisotopic mass.</text>
</comment>
<comment type="similarity">
    <text evidence="6">Belongs to the neurotoxin 10 (Hwtx-1) family. 59 (Tltx) subfamily.</text>
</comment>
<evidence type="ECO:0000250" key="1">
    <source>
        <dbReference type="UniProtKB" id="P58426"/>
    </source>
</evidence>
<evidence type="ECO:0000269" key="2">
    <source>
    </source>
</evidence>
<evidence type="ECO:0000269" key="3">
    <source>
    </source>
</evidence>
<evidence type="ECO:0000303" key="4">
    <source>
    </source>
</evidence>
<evidence type="ECO:0000303" key="5">
    <source>
    </source>
</evidence>
<evidence type="ECO:0000305" key="6"/>
<evidence type="ECO:0000305" key="7">
    <source>
    </source>
</evidence>
<evidence type="ECO:0000305" key="8">
    <source>
    </source>
</evidence>
<sequence length="35" mass="4200">DDCLGMFSSCDPNNDKCCPNRVCRVRDQWCKYKLW</sequence>
<organism evidence="6">
    <name type="scientific">Theraphosa blondi</name>
    <name type="common">Goliath birdeating spider</name>
    <dbReference type="NCBI Taxonomy" id="260533"/>
    <lineage>
        <taxon>Eukaryota</taxon>
        <taxon>Metazoa</taxon>
        <taxon>Ecdysozoa</taxon>
        <taxon>Arthropoda</taxon>
        <taxon>Chelicerata</taxon>
        <taxon>Arachnida</taxon>
        <taxon>Araneae</taxon>
        <taxon>Mygalomorphae</taxon>
        <taxon>Theraphosidae</taxon>
        <taxon>Theraphosa</taxon>
    </lineage>
</organism>
<protein>
    <recommendedName>
        <fullName evidence="6">Kappa-theraphotoxin-Tb1c</fullName>
        <shortName evidence="6">Kappa-TRTX-Tb1c</shortName>
    </recommendedName>
    <alternativeName>
        <fullName evidence="6">Theraphotoxin-3</fullName>
    </alternativeName>
    <alternativeName>
        <fullName evidence="4 5">TlTx3</fullName>
    </alternativeName>
</protein>
<feature type="peptide" id="PRO_0000045028" description="Kappa-theraphotoxin-Tb1c" evidence="2">
    <location>
        <begin position="1"/>
        <end position="35"/>
    </location>
</feature>
<feature type="disulfide bond" evidence="1">
    <location>
        <begin position="3"/>
        <end position="18"/>
    </location>
</feature>
<feature type="disulfide bond" evidence="1">
    <location>
        <begin position="10"/>
        <end position="23"/>
    </location>
</feature>
<feature type="disulfide bond" evidence="1">
    <location>
        <begin position="17"/>
        <end position="30"/>
    </location>
</feature>
<name>TX3_THEBL</name>
<proteinExistence type="evidence at protein level"/>